<reference key="1">
    <citation type="journal article" date="2003" name="Nat. Biotechnol.">
        <title>The genome sequence of the entomopathogenic bacterium Photorhabdus luminescens.</title>
        <authorList>
            <person name="Duchaud E."/>
            <person name="Rusniok C."/>
            <person name="Frangeul L."/>
            <person name="Buchrieser C."/>
            <person name="Givaudan A."/>
            <person name="Taourit S."/>
            <person name="Bocs S."/>
            <person name="Boursaux-Eude C."/>
            <person name="Chandler M."/>
            <person name="Charles J.-F."/>
            <person name="Dassa E."/>
            <person name="Derose R."/>
            <person name="Derzelle S."/>
            <person name="Freyssinet G."/>
            <person name="Gaudriault S."/>
            <person name="Medigue C."/>
            <person name="Lanois A."/>
            <person name="Powell K."/>
            <person name="Siguier P."/>
            <person name="Vincent R."/>
            <person name="Wingate V."/>
            <person name="Zouine M."/>
            <person name="Glaser P."/>
            <person name="Boemare N."/>
            <person name="Danchin A."/>
            <person name="Kunst F."/>
        </authorList>
    </citation>
    <scope>NUCLEOTIDE SEQUENCE [LARGE SCALE GENOMIC DNA]</scope>
    <source>
        <strain>DSM 15139 / CIP 105565 / TT01</strain>
    </source>
</reference>
<comment type="function">
    <text evidence="1">Catalyzes the specific phosphorylation of 1,6-anhydro-N-acetylmuramic acid (anhMurNAc) with the simultaneous cleavage of the 1,6-anhydro ring, generating MurNAc-6-P. Is required for the utilization of anhMurNAc either imported from the medium or derived from its own cell wall murein, and thus plays a role in cell wall recycling.</text>
</comment>
<comment type="catalytic activity">
    <reaction evidence="1">
        <text>1,6-anhydro-N-acetyl-beta-muramate + ATP + H2O = N-acetyl-D-muramate 6-phosphate + ADP + H(+)</text>
        <dbReference type="Rhea" id="RHEA:24952"/>
        <dbReference type="ChEBI" id="CHEBI:15377"/>
        <dbReference type="ChEBI" id="CHEBI:15378"/>
        <dbReference type="ChEBI" id="CHEBI:30616"/>
        <dbReference type="ChEBI" id="CHEBI:58690"/>
        <dbReference type="ChEBI" id="CHEBI:58722"/>
        <dbReference type="ChEBI" id="CHEBI:456216"/>
        <dbReference type="EC" id="2.7.1.170"/>
    </reaction>
</comment>
<comment type="pathway">
    <text evidence="1">Amino-sugar metabolism; 1,6-anhydro-N-acetylmuramate degradation.</text>
</comment>
<comment type="pathway">
    <text evidence="1">Cell wall biogenesis; peptidoglycan recycling.</text>
</comment>
<comment type="similarity">
    <text evidence="1">Belongs to the anhydro-N-acetylmuramic acid kinase family.</text>
</comment>
<proteinExistence type="inferred from homology"/>
<keyword id="KW-0067">ATP-binding</keyword>
<keyword id="KW-0119">Carbohydrate metabolism</keyword>
<keyword id="KW-0418">Kinase</keyword>
<keyword id="KW-0547">Nucleotide-binding</keyword>
<keyword id="KW-1185">Reference proteome</keyword>
<keyword id="KW-0808">Transferase</keyword>
<organism>
    <name type="scientific">Photorhabdus laumondii subsp. laumondii (strain DSM 15139 / CIP 105565 / TT01)</name>
    <name type="common">Photorhabdus luminescens subsp. laumondii</name>
    <dbReference type="NCBI Taxonomy" id="243265"/>
    <lineage>
        <taxon>Bacteria</taxon>
        <taxon>Pseudomonadati</taxon>
        <taxon>Pseudomonadota</taxon>
        <taxon>Gammaproteobacteria</taxon>
        <taxon>Enterobacterales</taxon>
        <taxon>Morganellaceae</taxon>
        <taxon>Photorhabdus</taxon>
    </lineage>
</organism>
<dbReference type="EC" id="2.7.1.170" evidence="1"/>
<dbReference type="EMBL" id="BX571867">
    <property type="protein sequence ID" value="CAE14972.1"/>
    <property type="molecule type" value="Genomic_DNA"/>
</dbReference>
<dbReference type="SMR" id="Q7N3W4"/>
<dbReference type="STRING" id="243265.plu2598"/>
<dbReference type="KEGG" id="plu:plu2598"/>
<dbReference type="eggNOG" id="COG2377">
    <property type="taxonomic scope" value="Bacteria"/>
</dbReference>
<dbReference type="HOGENOM" id="CLU_038782_0_0_6"/>
<dbReference type="UniPathway" id="UPA00343"/>
<dbReference type="UniPathway" id="UPA00544"/>
<dbReference type="Proteomes" id="UP000002514">
    <property type="component" value="Chromosome"/>
</dbReference>
<dbReference type="GO" id="GO:0005524">
    <property type="term" value="F:ATP binding"/>
    <property type="evidence" value="ECO:0007669"/>
    <property type="project" value="UniProtKB-UniRule"/>
</dbReference>
<dbReference type="GO" id="GO:0016301">
    <property type="term" value="F:kinase activity"/>
    <property type="evidence" value="ECO:0007669"/>
    <property type="project" value="UniProtKB-KW"/>
</dbReference>
<dbReference type="GO" id="GO:0016773">
    <property type="term" value="F:phosphotransferase activity, alcohol group as acceptor"/>
    <property type="evidence" value="ECO:0007669"/>
    <property type="project" value="UniProtKB-UniRule"/>
</dbReference>
<dbReference type="GO" id="GO:0097175">
    <property type="term" value="P:1,6-anhydro-N-acetyl-beta-muramic acid catabolic process"/>
    <property type="evidence" value="ECO:0007669"/>
    <property type="project" value="UniProtKB-UniRule"/>
</dbReference>
<dbReference type="GO" id="GO:0006040">
    <property type="term" value="P:amino sugar metabolic process"/>
    <property type="evidence" value="ECO:0007669"/>
    <property type="project" value="InterPro"/>
</dbReference>
<dbReference type="GO" id="GO:0009254">
    <property type="term" value="P:peptidoglycan turnover"/>
    <property type="evidence" value="ECO:0007669"/>
    <property type="project" value="UniProtKB-UniRule"/>
</dbReference>
<dbReference type="CDD" id="cd24050">
    <property type="entry name" value="ASKHA_NBD_ANMK"/>
    <property type="match status" value="1"/>
</dbReference>
<dbReference type="Gene3D" id="3.30.420.40">
    <property type="match status" value="2"/>
</dbReference>
<dbReference type="HAMAP" id="MF_01270">
    <property type="entry name" value="AnhMurNAc_kinase"/>
    <property type="match status" value="1"/>
</dbReference>
<dbReference type="InterPro" id="IPR005338">
    <property type="entry name" value="Anhydro_N_Ac-Mur_kinase"/>
</dbReference>
<dbReference type="InterPro" id="IPR043129">
    <property type="entry name" value="ATPase_NBD"/>
</dbReference>
<dbReference type="NCBIfam" id="NF007138">
    <property type="entry name" value="PRK09585.1-1"/>
    <property type="match status" value="1"/>
</dbReference>
<dbReference type="NCBIfam" id="NF007139">
    <property type="entry name" value="PRK09585.1-3"/>
    <property type="match status" value="1"/>
</dbReference>
<dbReference type="NCBIfam" id="NF007148">
    <property type="entry name" value="PRK09585.3-2"/>
    <property type="match status" value="1"/>
</dbReference>
<dbReference type="PANTHER" id="PTHR30605">
    <property type="entry name" value="ANHYDRO-N-ACETYLMURAMIC ACID KINASE"/>
    <property type="match status" value="1"/>
</dbReference>
<dbReference type="PANTHER" id="PTHR30605:SF0">
    <property type="entry name" value="ANHYDRO-N-ACETYLMURAMIC ACID KINASE"/>
    <property type="match status" value="1"/>
</dbReference>
<dbReference type="Pfam" id="PF03702">
    <property type="entry name" value="AnmK"/>
    <property type="match status" value="1"/>
</dbReference>
<dbReference type="SUPFAM" id="SSF53067">
    <property type="entry name" value="Actin-like ATPase domain"/>
    <property type="match status" value="1"/>
</dbReference>
<name>ANMK_PHOLL</name>
<protein>
    <recommendedName>
        <fullName evidence="1">Anhydro-N-acetylmuramic acid kinase</fullName>
        <ecNumber evidence="1">2.7.1.170</ecNumber>
    </recommendedName>
    <alternativeName>
        <fullName evidence="1">AnhMurNAc kinase</fullName>
    </alternativeName>
</protein>
<feature type="chain" id="PRO_0000250023" description="Anhydro-N-acetylmuramic acid kinase">
    <location>
        <begin position="1"/>
        <end position="372"/>
    </location>
</feature>
<feature type="binding site" evidence="1">
    <location>
        <begin position="14"/>
        <end position="21"/>
    </location>
    <ligand>
        <name>ATP</name>
        <dbReference type="ChEBI" id="CHEBI:30616"/>
    </ligand>
</feature>
<evidence type="ECO:0000255" key="1">
    <source>
        <dbReference type="HAMAP-Rule" id="MF_01270"/>
    </source>
</evidence>
<sequence length="372" mass="39992">MVMKSGRYIGVMSGTSLDGVDVVLAAINDKVVAQQASYSHPFPYELKQKILAVCQGQQTTLSAIGRLDYELGSLFAEAVQGLLIKTGLTASDITAVGCHGQTVWHEPNSHTPFTMQLGDNNRIAALTGITVVGDFRRRDMAYGGQGAPLVPAFHFAVLGHLTERRIILNIGGIANITTLLPGSPVKGYDTGPGNMLMDSWVWRHQKKPYDKDAQWAREGVVNNKLLGQMLSDHYFSRPAPKSTGREYFNMSWLEAQLVNFPDIPPVDVQATLAELTAASVSQQIMLSGGCERLLVCGGGAHNPQIMSRLSALLPGTEVCPTDKYGLSGDDMEALAFAWLAFRTMSGAPGNLPSVTGASTETILGAIYPVINQ</sequence>
<accession>Q7N3W4</accession>
<gene>
    <name evidence="1" type="primary">anmK</name>
    <name type="ordered locus">plu2598</name>
</gene>